<accession>B7NAR8</accession>
<evidence type="ECO:0000250" key="1"/>
<evidence type="ECO:0000255" key="2"/>
<evidence type="ECO:0000305" key="3"/>
<organism>
    <name type="scientific">Escherichia coli O17:K52:H18 (strain UMN026 / ExPEC)</name>
    <dbReference type="NCBI Taxonomy" id="585056"/>
    <lineage>
        <taxon>Bacteria</taxon>
        <taxon>Pseudomonadati</taxon>
        <taxon>Pseudomonadota</taxon>
        <taxon>Gammaproteobacteria</taxon>
        <taxon>Enterobacterales</taxon>
        <taxon>Enterobacteriaceae</taxon>
        <taxon>Escherichia</taxon>
    </lineage>
</organism>
<gene>
    <name type="primary">csgC</name>
    <name type="ordered locus">ECUMN_1217</name>
</gene>
<keyword id="KW-0143">Chaperone</keyword>
<keyword id="KW-0574">Periplasm</keyword>
<keyword id="KW-0732">Signal</keyword>
<dbReference type="EMBL" id="CU928163">
    <property type="protein sequence ID" value="CAR12426.1"/>
    <property type="status" value="ALT_INIT"/>
    <property type="molecule type" value="Genomic_DNA"/>
</dbReference>
<dbReference type="RefSeq" id="WP_000992818.1">
    <property type="nucleotide sequence ID" value="NC_011751.1"/>
</dbReference>
<dbReference type="SMR" id="B7NAR8"/>
<dbReference type="STRING" id="585056.ECUMN_1217"/>
<dbReference type="GeneID" id="75171169"/>
<dbReference type="KEGG" id="eum:ECUMN_1217"/>
<dbReference type="PATRIC" id="fig|585056.7.peg.1419"/>
<dbReference type="HOGENOM" id="CLU_152585_0_0_6"/>
<dbReference type="Proteomes" id="UP000007097">
    <property type="component" value="Chromosome"/>
</dbReference>
<dbReference type="GO" id="GO:0042597">
    <property type="term" value="C:periplasmic space"/>
    <property type="evidence" value="ECO:0007669"/>
    <property type="project" value="UniProtKB-SubCell"/>
</dbReference>
<dbReference type="Gene3D" id="2.60.40.2420">
    <property type="match status" value="1"/>
</dbReference>
<dbReference type="InterPro" id="IPR053722">
    <property type="entry name" value="Curli_assembly_CsgC/AgfC"/>
</dbReference>
<dbReference type="InterPro" id="IPR014491">
    <property type="entry name" value="Curli_production_prot_CsgC"/>
</dbReference>
<dbReference type="NCBIfam" id="NF007507">
    <property type="entry name" value="PRK10102.1"/>
    <property type="match status" value="1"/>
</dbReference>
<dbReference type="Pfam" id="PF10610">
    <property type="entry name" value="Tafi-CsgC"/>
    <property type="match status" value="1"/>
</dbReference>
<dbReference type="PIRSF" id="PIRSF018100">
    <property type="entry name" value="CsgC"/>
    <property type="match status" value="1"/>
</dbReference>
<reference key="1">
    <citation type="journal article" date="2009" name="PLoS Genet.">
        <title>Organised genome dynamics in the Escherichia coli species results in highly diverse adaptive paths.</title>
        <authorList>
            <person name="Touchon M."/>
            <person name="Hoede C."/>
            <person name="Tenaillon O."/>
            <person name="Barbe V."/>
            <person name="Baeriswyl S."/>
            <person name="Bidet P."/>
            <person name="Bingen E."/>
            <person name="Bonacorsi S."/>
            <person name="Bouchier C."/>
            <person name="Bouvet O."/>
            <person name="Calteau A."/>
            <person name="Chiapello H."/>
            <person name="Clermont O."/>
            <person name="Cruveiller S."/>
            <person name="Danchin A."/>
            <person name="Diard M."/>
            <person name="Dossat C."/>
            <person name="Karoui M.E."/>
            <person name="Frapy E."/>
            <person name="Garry L."/>
            <person name="Ghigo J.M."/>
            <person name="Gilles A.M."/>
            <person name="Johnson J."/>
            <person name="Le Bouguenec C."/>
            <person name="Lescat M."/>
            <person name="Mangenot S."/>
            <person name="Martinez-Jehanne V."/>
            <person name="Matic I."/>
            <person name="Nassif X."/>
            <person name="Oztas S."/>
            <person name="Petit M.A."/>
            <person name="Pichon C."/>
            <person name="Rouy Z."/>
            <person name="Ruf C.S."/>
            <person name="Schneider D."/>
            <person name="Tourret J."/>
            <person name="Vacherie B."/>
            <person name="Vallenet D."/>
            <person name="Medigue C."/>
            <person name="Rocha E.P.C."/>
            <person name="Denamur E."/>
        </authorList>
    </citation>
    <scope>NUCLEOTIDE SEQUENCE [LARGE SCALE GENOMIC DNA]</scope>
    <source>
        <strain>UMN026 / ExPEC</strain>
    </source>
</reference>
<sequence>MNALLLLAALSSQITFNTTQQGDMYTIIPEVTLTQSCLCRVQILSLREGSSGQSQTKQEKTLSLPANQPIALTKLSLNISPDDRVKIVVTVSDGQSLHLSQQWPPSSEKS</sequence>
<feature type="signal peptide" evidence="2">
    <location>
        <begin position="1"/>
        <end position="8"/>
    </location>
</feature>
<feature type="chain" id="PRO_0000391677" description="Curli assembly protein CsgC">
    <location>
        <begin position="9"/>
        <end position="110"/>
    </location>
</feature>
<protein>
    <recommendedName>
        <fullName>Curli assembly protein CsgC</fullName>
    </recommendedName>
</protein>
<name>CSGC_ECOLU</name>
<comment type="function">
    <text evidence="1">Plays a role in the extracellular assembly of CsgA into thin aggregative fimbriae (Tafi) fibers. Assembly may also require CsgE. Tafi are thought to be assembled via an extracellular nucleation-precipitation (ENP) pathway, and possibly also via an intracellular non-CsgC-dependent pathway (By similarity).</text>
</comment>
<comment type="subcellular location">
    <subcellularLocation>
        <location evidence="1">Periplasm</location>
    </subcellularLocation>
</comment>
<comment type="similarity">
    <text evidence="3">Belongs to the CsgC/AgfC family.</text>
</comment>
<comment type="sequence caution" evidence="3">
    <conflict type="erroneous initiation">
        <sequence resource="EMBL-CDS" id="CAR12426"/>
    </conflict>
</comment>
<proteinExistence type="inferred from homology"/>